<sequence>MMAKLMITVMMVLLLSLQQGADGRSERWRKNQMAASSIMRNLITARIDPPRYCNHIICYEDSECSQWCTAGCNSITSKCDTL</sequence>
<feature type="signal peptide" evidence="2">
    <location>
        <begin position="1"/>
        <end position="23"/>
    </location>
</feature>
<feature type="propeptide" id="PRO_0000415072" evidence="1">
    <location>
        <begin position="24"/>
        <end position="50"/>
    </location>
</feature>
<feature type="peptide" id="PRO_0000415073" description="Turripeptide IX-23">
    <location>
        <begin position="52"/>
        <end position="82"/>
    </location>
</feature>
<feature type="disulfide bond" evidence="1">
    <location>
        <begin position="53"/>
        <end position="68"/>
    </location>
</feature>
<feature type="disulfide bond" evidence="1">
    <location>
        <begin position="58"/>
        <end position="72"/>
    </location>
</feature>
<feature type="disulfide bond" evidence="1">
    <location>
        <begin position="64"/>
        <end position="79"/>
    </location>
</feature>
<organism>
    <name type="scientific">Gemmula speciosa</name>
    <name type="common">Splendid gem-turris</name>
    <name type="synonym">Pleurotoma speciosa</name>
    <dbReference type="NCBI Taxonomy" id="439592"/>
    <lineage>
        <taxon>Eukaryota</taxon>
        <taxon>Metazoa</taxon>
        <taxon>Spiralia</taxon>
        <taxon>Lophotrochozoa</taxon>
        <taxon>Mollusca</taxon>
        <taxon>Gastropoda</taxon>
        <taxon>Caenogastropoda</taxon>
        <taxon>Neogastropoda</taxon>
        <taxon>Conoidea</taxon>
        <taxon>Turridae</taxon>
        <taxon>Gemmula</taxon>
    </lineage>
</organism>
<dbReference type="EMBL" id="GU721051">
    <property type="protein sequence ID" value="ADE28868.1"/>
    <property type="molecule type" value="mRNA"/>
</dbReference>
<dbReference type="GO" id="GO:0005576">
    <property type="term" value="C:extracellular region"/>
    <property type="evidence" value="ECO:0007669"/>
    <property type="project" value="UniProtKB-SubCell"/>
</dbReference>
<dbReference type="GO" id="GO:0090729">
    <property type="term" value="F:toxin activity"/>
    <property type="evidence" value="ECO:0007669"/>
    <property type="project" value="UniProtKB-KW"/>
</dbReference>
<dbReference type="InterPro" id="IPR026210">
    <property type="entry name" value="Toxin_Pg"/>
</dbReference>
<dbReference type="PRINTS" id="PR02080">
    <property type="entry name" value="TOXINPGFAMLY"/>
</dbReference>
<proteinExistence type="evidence at transcript level"/>
<reference key="1">
    <citation type="submission" date="2010-02" db="EMBL/GenBank/DDBJ databases">
        <title>Cysteine-rich toxin gene families from Gemmula speciosa (Reeve, 1843).</title>
        <authorList>
            <person name="Uichanco J.A.V."/>
            <person name="Planta J.R.G."/>
            <person name="Santos A.D."/>
            <person name="Concepcion G.P."/>
        </authorList>
    </citation>
    <scope>NUCLEOTIDE SEQUENCE [MRNA]</scope>
    <source>
        <tissue>Venom duct</tissue>
    </source>
</reference>
<keyword id="KW-1015">Disulfide bond</keyword>
<keyword id="KW-0528">Neurotoxin</keyword>
<keyword id="KW-0964">Secreted</keyword>
<keyword id="KW-0732">Signal</keyword>
<keyword id="KW-0800">Toxin</keyword>
<comment type="subcellular location">
    <subcellularLocation>
        <location evidence="1">Secreted</location>
    </subcellularLocation>
</comment>
<comment type="tissue specificity">
    <text>Expressed by the venom duct.</text>
</comment>
<comment type="domain">
    <text>The cysteine framework is IX (C-C-C-C-C-C).</text>
</comment>
<comment type="similarity">
    <text evidence="3">Belongs to the Pg turripeptide superfamily.</text>
</comment>
<protein>
    <recommendedName>
        <fullName>Turripeptide IX-23</fullName>
    </recommendedName>
</protein>
<name>TU9N_GEMSP</name>
<accession>D5KXH0</accession>
<evidence type="ECO:0000250" key="1"/>
<evidence type="ECO:0000255" key="2"/>
<evidence type="ECO:0000305" key="3"/>